<name>P5_BPPRD</name>
<reference key="1">
    <citation type="journal article" date="1990" name="Virology">
        <title>Capsomer proteins of bacteriophage PRD1, a bacterial virus with a membrane.</title>
        <authorList>
            <person name="Bamford J.K.H."/>
            <person name="Bamford D.H."/>
        </authorList>
    </citation>
    <scope>NUCLEOTIDE SEQUENCE [GENOMIC DNA]</scope>
    <scope>PROTEIN SEQUENCE OF 2-6</scope>
</reference>
<reference key="2">
    <citation type="journal article" date="2005" name="J. Mol. Biol.">
        <title>A snapshot of viral evolution from genome analysis of the tectiviridae family.</title>
        <authorList>
            <person name="Saren A.M."/>
            <person name="Ravantti J.J."/>
            <person name="Benson S.D."/>
            <person name="Burnett R.M."/>
            <person name="Paulin L."/>
            <person name="Bamford D.H."/>
            <person name="Bamford J.K.H."/>
        </authorList>
    </citation>
    <scope>NUCLEOTIDE SEQUENCE [GENOMIC DNA]</scope>
</reference>
<reference key="3">
    <citation type="journal article" date="1990" name="Nature">
        <title>Collagenous proteins multiply.</title>
        <authorList>
            <person name="Bamford D.H."/>
            <person name="Bamford J.K.H."/>
        </authorList>
    </citation>
    <scope>COLLAGENOUS REGION</scope>
</reference>
<reference key="4">
    <citation type="journal article" date="2000" name="Biochemistry">
        <title>Assembly of bacteriophage PRD1 spike complex: role of the multidomain protein P5.</title>
        <authorList>
            <person name="Caldentey J."/>
            <person name="Tuma R."/>
            <person name="Bamford D.H."/>
        </authorList>
    </citation>
    <scope>FUNCTION</scope>
</reference>
<reference key="5">
    <citation type="journal article" date="2005" name="Mol. Cell">
        <title>The structure of the bacteriophage PRD1 spike sheds light on the evolution of viral capsid architecture.</title>
        <authorList>
            <person name="Merckel M.C."/>
            <person name="Huiskonen J.T."/>
            <person name="Bamford D.H."/>
            <person name="Goldman A."/>
            <person name="Tuma R."/>
        </authorList>
    </citation>
    <scope>X-RAY CRYSTALLOGRAPHY (2.0 ANGSTROMS) OF 197-339</scope>
</reference>
<dbReference type="EMBL" id="AY848689">
    <property type="protein sequence ID" value="AAX45923.1"/>
    <property type="molecule type" value="Genomic_DNA"/>
</dbReference>
<dbReference type="EMBL" id="M55568">
    <property type="protein sequence ID" value="AAA32446.1"/>
    <property type="molecule type" value="Genomic_DNA"/>
</dbReference>
<dbReference type="PIR" id="B46345">
    <property type="entry name" value="B46345"/>
</dbReference>
<dbReference type="RefSeq" id="NP_040686.1">
    <property type="nucleotide sequence ID" value="NC_001421.2"/>
</dbReference>
<dbReference type="RefSeq" id="YP_009639960.1">
    <property type="nucleotide sequence ID" value="NC_001421.2"/>
</dbReference>
<dbReference type="PDB" id="1YQ5">
    <property type="method" value="X-ray"/>
    <property type="resolution" value="2.00 A"/>
    <property type="chains" value="A/B=197-340"/>
</dbReference>
<dbReference type="PDB" id="1YQ6">
    <property type="method" value="X-ray"/>
    <property type="resolution" value="2.40 A"/>
    <property type="chains" value="A/B/C=197-340"/>
</dbReference>
<dbReference type="PDB" id="1YQ8">
    <property type="method" value="X-ray"/>
    <property type="resolution" value="2.60 A"/>
    <property type="chains" value="A=142-340"/>
</dbReference>
<dbReference type="PDBsum" id="1YQ5"/>
<dbReference type="PDBsum" id="1YQ6"/>
<dbReference type="PDBsum" id="1YQ8"/>
<dbReference type="SMR" id="P22536"/>
<dbReference type="GeneID" id="1260939"/>
<dbReference type="OrthoDB" id="29819at10239"/>
<dbReference type="EvolutionaryTrace" id="P22536"/>
<dbReference type="Proteomes" id="UP000002143">
    <property type="component" value="Segment"/>
</dbReference>
<dbReference type="GO" id="GO:0098029">
    <property type="term" value="C:icosahedral viral capsid, spike"/>
    <property type="evidence" value="ECO:0000315"/>
    <property type="project" value="CACAO"/>
</dbReference>
<dbReference type="Gene3D" id="2.60.120.670">
    <property type="entry name" value="Minor capsid protein"/>
    <property type="match status" value="1"/>
</dbReference>
<dbReference type="InterPro" id="IPR015044">
    <property type="entry name" value="Phage_PRD1_P5_C"/>
</dbReference>
<dbReference type="InterPro" id="IPR015043">
    <property type="entry name" value="Phage_PRD1_P5_spike_N"/>
</dbReference>
<dbReference type="InterPro" id="IPR038663">
    <property type="entry name" value="PRD1_P5_C_sf"/>
</dbReference>
<dbReference type="Pfam" id="PF08949">
    <property type="entry name" value="PRD1_P5_C"/>
    <property type="match status" value="1"/>
</dbReference>
<dbReference type="Pfam" id="PF08948">
    <property type="entry name" value="PRD1_P5_spike_N"/>
    <property type="match status" value="1"/>
</dbReference>
<organism>
    <name type="scientific">Enterobacteria phage PRD1</name>
    <name type="common">Bacteriophage PRD1</name>
    <dbReference type="NCBI Taxonomy" id="10658"/>
    <lineage>
        <taxon>Viruses</taxon>
        <taxon>Varidnaviria</taxon>
        <taxon>Bamfordvirae</taxon>
        <taxon>Preplasmiviricota</taxon>
        <taxon>Tectiliviricetes</taxon>
        <taxon>Kalamavirales</taxon>
        <taxon>Tectiviridae</taxon>
        <taxon>Alphatectivirus</taxon>
        <taxon>Alphatectivirus PRD1</taxon>
    </lineage>
</organism>
<keyword id="KW-0002">3D-structure</keyword>
<keyword id="KW-0167">Capsid protein</keyword>
<keyword id="KW-0903">Direct protein sequencing</keyword>
<keyword id="KW-1185">Reference proteome</keyword>
<keyword id="KW-0946">Virion</keyword>
<organismHost>
    <name type="scientific">Acinetobacter calcoaceticus</name>
    <dbReference type="NCBI Taxonomy" id="471"/>
</organismHost>
<organismHost>
    <name type="scientific">Escherichia coli</name>
    <dbReference type="NCBI Taxonomy" id="562"/>
</organismHost>
<organismHost>
    <name type="scientific">Proteus mirabilis</name>
    <dbReference type="NCBI Taxonomy" id="584"/>
</organismHost>
<organismHost>
    <name type="scientific">Pseudomonas aeruginosa</name>
    <dbReference type="NCBI Taxonomy" id="287"/>
</organismHost>
<organismHost>
    <name type="scientific">Pseudomonas fluorescens</name>
    <dbReference type="NCBI Taxonomy" id="294"/>
</organismHost>
<organismHost>
    <name type="scientific">Pseudomonas putida</name>
    <name type="common">Arthrobacter siderocapsulatus</name>
    <dbReference type="NCBI Taxonomy" id="303"/>
</organismHost>
<organismHost>
    <name type="scientific">Salmonella typhimurium</name>
    <dbReference type="NCBI Taxonomy" id="90371"/>
</organismHost>
<organismHost>
    <name type="scientific">Vibrio cholerae</name>
    <dbReference type="NCBI Taxonomy" id="666"/>
</organismHost>
<sequence>MANQQIGGSTVTYNGAIPMGGPVAINSVIEIAGTEVLVDLKLDYATGKISGVQTLYIDLRDFLGDVTVTMPDTGQRITARAGTQGYYPVLSTNLMKFIVSATIDGKFPMNFINFPIALGVWPSGIKGDKGDPGAPGPAGGTVVVEDSGASFGESLLDTTSEPGKILVKRISGGSGITVTDYGDQVEIEASGGGGGGGGVTDALSLMYSTSTGGPASIAANALTDFDLSGALTVNSVGTGLTKSAAGIQLAAGKSGLYQITMTVKNNTVTTGNYLLRVKYGSSDFVVACPASSLTAGGTISLLIYCNVLGVPSLDVLKFSLCNDGAALSNYIINITAAKIN</sequence>
<proteinExistence type="evidence at protein level"/>
<feature type="initiator methionine" description="Removed; by host" evidence="2">
    <location>
        <position position="1"/>
    </location>
</feature>
<feature type="chain" id="PRO_0000165346" description="Spike protein P5">
    <location>
        <begin position="2"/>
        <end position="340"/>
    </location>
</feature>
<feature type="domain" description="Collagen-like">
    <location>
        <begin position="123"/>
        <end position="141"/>
    </location>
</feature>
<feature type="region of interest" description="Domain-1">
    <location>
        <begin position="2"/>
        <end position="122"/>
    </location>
</feature>
<feature type="region of interest" description="Domain-2">
    <location>
        <begin position="142"/>
        <end position="340"/>
    </location>
</feature>
<feature type="strand" evidence="4">
    <location>
        <begin position="148"/>
        <end position="150"/>
    </location>
</feature>
<feature type="turn" evidence="4">
    <location>
        <begin position="153"/>
        <end position="155"/>
    </location>
</feature>
<feature type="strand" evidence="4">
    <location>
        <begin position="158"/>
        <end position="161"/>
    </location>
</feature>
<feature type="strand" evidence="4">
    <location>
        <begin position="176"/>
        <end position="181"/>
    </location>
</feature>
<feature type="strand" evidence="4">
    <location>
        <begin position="184"/>
        <end position="189"/>
    </location>
</feature>
<feature type="strand" evidence="3">
    <location>
        <begin position="200"/>
        <end position="207"/>
    </location>
</feature>
<feature type="turn" evidence="3">
    <location>
        <begin position="209"/>
        <end position="212"/>
    </location>
</feature>
<feature type="strand" evidence="3">
    <location>
        <begin position="215"/>
        <end position="217"/>
    </location>
</feature>
<feature type="strand" evidence="3">
    <location>
        <begin position="231"/>
        <end position="242"/>
    </location>
</feature>
<feature type="strand" evidence="3">
    <location>
        <begin position="244"/>
        <end position="249"/>
    </location>
</feature>
<feature type="strand" evidence="3">
    <location>
        <begin position="255"/>
        <end position="264"/>
    </location>
</feature>
<feature type="strand" evidence="3">
    <location>
        <begin position="270"/>
        <end position="279"/>
    </location>
</feature>
<feature type="strand" evidence="3">
    <location>
        <begin position="282"/>
        <end position="289"/>
    </location>
</feature>
<feature type="strand" evidence="3">
    <location>
        <begin position="296"/>
        <end position="305"/>
    </location>
</feature>
<feature type="turn" evidence="3">
    <location>
        <begin position="311"/>
        <end position="313"/>
    </location>
</feature>
<feature type="strand" evidence="3">
    <location>
        <begin position="314"/>
        <end position="325"/>
    </location>
</feature>
<feature type="strand" evidence="3">
    <location>
        <begin position="327"/>
        <end position="329"/>
    </location>
</feature>
<feature type="strand" evidence="3">
    <location>
        <begin position="331"/>
        <end position="338"/>
    </location>
</feature>
<evidence type="ECO:0000269" key="1">
    <source>
    </source>
</evidence>
<evidence type="ECO:0000269" key="2">
    <source>
    </source>
</evidence>
<evidence type="ECO:0007829" key="3">
    <source>
        <dbReference type="PDB" id="1YQ5"/>
    </source>
</evidence>
<evidence type="ECO:0007829" key="4">
    <source>
        <dbReference type="PDB" id="1YQ8"/>
    </source>
</evidence>
<accession>P22536</accession>
<accession>Q3T4P0</accession>
<protein>
    <recommendedName>
        <fullName>Spike protein P5</fullName>
    </recommendedName>
    <alternativeName>
        <fullName>Protein P5</fullName>
    </alternativeName>
</protein>
<comment type="function">
    <text evidence="1">In association with P31 and P2, forms the spike complexes located at the 5-fold vertices of the capsid. Essential for viral infectivity.</text>
</comment>
<comment type="subunit">
    <text>Homotrimer.</text>
</comment>
<comment type="subcellular location">
    <subcellularLocation>
        <location>Virion</location>
    </subcellularLocation>
</comment>
<comment type="domain">
    <text>The short collagen-like region is proposed to act as a trimerization signal leading to the fulfillment of the symmetry requirement of the minor capsomer.</text>
</comment>
<gene>
    <name type="primary">V</name>
</gene>